<keyword id="KW-0963">Cytoplasm</keyword>
<keyword id="KW-0671">Queuosine biosynthesis</keyword>
<keyword id="KW-0949">S-adenosyl-L-methionine</keyword>
<keyword id="KW-0808">Transferase</keyword>
<dbReference type="EC" id="2.4.99.17" evidence="1"/>
<dbReference type="EMBL" id="CP000941">
    <property type="protein sequence ID" value="ACA11671.1"/>
    <property type="molecule type" value="Genomic_DNA"/>
</dbReference>
<dbReference type="SMR" id="B0U6A9"/>
<dbReference type="KEGG" id="xfm:Xfasm12_0673"/>
<dbReference type="HOGENOM" id="CLU_039110_1_0_6"/>
<dbReference type="UniPathway" id="UPA00392"/>
<dbReference type="GO" id="GO:0005737">
    <property type="term" value="C:cytoplasm"/>
    <property type="evidence" value="ECO:0007669"/>
    <property type="project" value="UniProtKB-SubCell"/>
</dbReference>
<dbReference type="GO" id="GO:0051075">
    <property type="term" value="F:S-adenosylmethionine:tRNA ribosyltransferase-isomerase activity"/>
    <property type="evidence" value="ECO:0007669"/>
    <property type="project" value="UniProtKB-EC"/>
</dbReference>
<dbReference type="GO" id="GO:0008616">
    <property type="term" value="P:queuosine biosynthetic process"/>
    <property type="evidence" value="ECO:0007669"/>
    <property type="project" value="UniProtKB-UniRule"/>
</dbReference>
<dbReference type="GO" id="GO:0002099">
    <property type="term" value="P:tRNA wobble guanine modification"/>
    <property type="evidence" value="ECO:0007669"/>
    <property type="project" value="TreeGrafter"/>
</dbReference>
<dbReference type="FunFam" id="3.40.1780.10:FF:000001">
    <property type="entry name" value="S-adenosylmethionine:tRNA ribosyltransferase-isomerase"/>
    <property type="match status" value="1"/>
</dbReference>
<dbReference type="Gene3D" id="2.40.10.240">
    <property type="entry name" value="QueA-like"/>
    <property type="match status" value="1"/>
</dbReference>
<dbReference type="Gene3D" id="3.40.1780.10">
    <property type="entry name" value="QueA-like"/>
    <property type="match status" value="1"/>
</dbReference>
<dbReference type="HAMAP" id="MF_00113">
    <property type="entry name" value="QueA"/>
    <property type="match status" value="1"/>
</dbReference>
<dbReference type="InterPro" id="IPR003699">
    <property type="entry name" value="QueA"/>
</dbReference>
<dbReference type="InterPro" id="IPR042118">
    <property type="entry name" value="QueA_dom1"/>
</dbReference>
<dbReference type="InterPro" id="IPR042119">
    <property type="entry name" value="QueA_dom2"/>
</dbReference>
<dbReference type="InterPro" id="IPR036100">
    <property type="entry name" value="QueA_sf"/>
</dbReference>
<dbReference type="NCBIfam" id="NF001140">
    <property type="entry name" value="PRK00147.1"/>
    <property type="match status" value="1"/>
</dbReference>
<dbReference type="NCBIfam" id="TIGR00113">
    <property type="entry name" value="queA"/>
    <property type="match status" value="1"/>
</dbReference>
<dbReference type="PANTHER" id="PTHR30307">
    <property type="entry name" value="S-ADENOSYLMETHIONINE:TRNA RIBOSYLTRANSFERASE-ISOMERASE"/>
    <property type="match status" value="1"/>
</dbReference>
<dbReference type="PANTHER" id="PTHR30307:SF0">
    <property type="entry name" value="S-ADENOSYLMETHIONINE:TRNA RIBOSYLTRANSFERASE-ISOMERASE"/>
    <property type="match status" value="1"/>
</dbReference>
<dbReference type="Pfam" id="PF02547">
    <property type="entry name" value="Queuosine_synth"/>
    <property type="match status" value="1"/>
</dbReference>
<dbReference type="SUPFAM" id="SSF111337">
    <property type="entry name" value="QueA-like"/>
    <property type="match status" value="1"/>
</dbReference>
<proteinExistence type="inferred from homology"/>
<accession>B0U6A9</accession>
<gene>
    <name evidence="1" type="primary">queA</name>
    <name type="ordered locus">Xfasm12_0673</name>
</gene>
<evidence type="ECO:0000255" key="1">
    <source>
        <dbReference type="HAMAP-Rule" id="MF_00113"/>
    </source>
</evidence>
<organism>
    <name type="scientific">Xylella fastidiosa (strain M12)</name>
    <dbReference type="NCBI Taxonomy" id="405440"/>
    <lineage>
        <taxon>Bacteria</taxon>
        <taxon>Pseudomonadati</taxon>
        <taxon>Pseudomonadota</taxon>
        <taxon>Gammaproteobacteria</taxon>
        <taxon>Lysobacterales</taxon>
        <taxon>Lysobacteraceae</taxon>
        <taxon>Xylella</taxon>
    </lineage>
</organism>
<reference key="1">
    <citation type="journal article" date="2010" name="J. Bacteriol.">
        <title>Whole genome sequences of two Xylella fastidiosa strains (M12 and M23) causing almond leaf scorch disease in California.</title>
        <authorList>
            <person name="Chen J."/>
            <person name="Xie G."/>
            <person name="Han S."/>
            <person name="Chertkov O."/>
            <person name="Sims D."/>
            <person name="Civerolo E.L."/>
        </authorList>
    </citation>
    <scope>NUCLEOTIDE SEQUENCE [LARGE SCALE GENOMIC DNA]</scope>
    <source>
        <strain>M12</strain>
    </source>
</reference>
<comment type="function">
    <text evidence="1">Transfers and isomerizes the ribose moiety from AdoMet to the 7-aminomethyl group of 7-deazaguanine (preQ1-tRNA) to give epoxyqueuosine (oQ-tRNA).</text>
</comment>
<comment type="catalytic activity">
    <reaction evidence="1">
        <text>7-aminomethyl-7-carbaguanosine(34) in tRNA + S-adenosyl-L-methionine = epoxyqueuosine(34) in tRNA + adenine + L-methionine + 2 H(+)</text>
        <dbReference type="Rhea" id="RHEA:32155"/>
        <dbReference type="Rhea" id="RHEA-COMP:10342"/>
        <dbReference type="Rhea" id="RHEA-COMP:18582"/>
        <dbReference type="ChEBI" id="CHEBI:15378"/>
        <dbReference type="ChEBI" id="CHEBI:16708"/>
        <dbReference type="ChEBI" id="CHEBI:57844"/>
        <dbReference type="ChEBI" id="CHEBI:59789"/>
        <dbReference type="ChEBI" id="CHEBI:82833"/>
        <dbReference type="ChEBI" id="CHEBI:194443"/>
        <dbReference type="EC" id="2.4.99.17"/>
    </reaction>
</comment>
<comment type="pathway">
    <text evidence="1">tRNA modification; tRNA-queuosine biosynthesis.</text>
</comment>
<comment type="subunit">
    <text evidence="1">Monomer.</text>
</comment>
<comment type="subcellular location">
    <subcellularLocation>
        <location evidence="1">Cytoplasm</location>
    </subcellularLocation>
</comment>
<comment type="similarity">
    <text evidence="1">Belongs to the QueA family.</text>
</comment>
<sequence length="347" mass="38994">MLKKSDFHYDLPEELIAQGPLPERSASRLMLVPSAPEQFQDCYVRDLPELLQPGDLLVFNDTRVIPARLFGRKVSGGRVEVLIERFLGTHQAVVQLRTSRSLKVGNRILLDAGGHAEVLGRDGEFYLLSFDVESPLEQWLSDVGQLPLPPYIHREPDEYDRERYQTVFARAVGAVAAPTAGLHFDESLLARLRARGVEFGYITLHVGAGTFQPVRVALLQEHVMHSEWFKVGAELVEQVRSARARGGRVIAVGTTVVRSLESAMRHGELQPFVGETQIFIFPGYCIRSVDAMVTNFHLPESTLLMLVAAFAGRTRILDAYYHAVQQRYRFFSYGDAMLLFPRNAGEQ</sequence>
<protein>
    <recommendedName>
        <fullName evidence="1">S-adenosylmethionine:tRNA ribosyltransferase-isomerase</fullName>
        <ecNumber evidence="1">2.4.99.17</ecNumber>
    </recommendedName>
    <alternativeName>
        <fullName evidence="1">Queuosine biosynthesis protein QueA</fullName>
    </alternativeName>
</protein>
<feature type="chain" id="PRO_1000094832" description="S-adenosylmethionine:tRNA ribosyltransferase-isomerase">
    <location>
        <begin position="1"/>
        <end position="347"/>
    </location>
</feature>
<name>QUEA_XYLFM</name>